<keyword id="KW-0903">Direct protein sequencing</keyword>
<keyword id="KW-0256">Endoplasmic reticulum</keyword>
<keyword id="KW-0349">Heme</keyword>
<keyword id="KW-0408">Iron</keyword>
<keyword id="KW-0443">Lipid metabolism</keyword>
<keyword id="KW-0472">Membrane</keyword>
<keyword id="KW-0479">Metal-binding</keyword>
<keyword id="KW-0503">Monooxygenase</keyword>
<keyword id="KW-0521">NADP</keyword>
<keyword id="KW-0560">Oxidoreductase</keyword>
<keyword id="KW-1185">Reference proteome</keyword>
<keyword id="KW-0812">Transmembrane</keyword>
<keyword id="KW-1133">Transmembrane helix</keyword>
<gene>
    <name type="primary">Cyp4v2</name>
    <name type="synonym">Cyp4v3</name>
</gene>
<accession>Q9DBW0</accession>
<proteinExistence type="evidence at protein level"/>
<dbReference type="EC" id="1.14.14.79" evidence="2"/>
<dbReference type="EC" id="1.14.14.80" evidence="2"/>
<dbReference type="EMBL" id="AB056457">
    <property type="protein sequence ID" value="BAB33032.1"/>
    <property type="molecule type" value="mRNA"/>
</dbReference>
<dbReference type="EMBL" id="AK004724">
    <property type="protein sequence ID" value="BAB23507.1"/>
    <property type="molecule type" value="mRNA"/>
</dbReference>
<dbReference type="CCDS" id="CCDS22276.1"/>
<dbReference type="RefSeq" id="NP_598730.1">
    <property type="nucleotide sequence ID" value="NM_133969.2"/>
</dbReference>
<dbReference type="SMR" id="Q9DBW0"/>
<dbReference type="BioGRID" id="221840">
    <property type="interactions" value="2"/>
</dbReference>
<dbReference type="FunCoup" id="Q9DBW0">
    <property type="interactions" value="535"/>
</dbReference>
<dbReference type="STRING" id="10090.ENSMUSP00000092966"/>
<dbReference type="GlyGen" id="Q9DBW0">
    <property type="glycosylation" value="1 site, 1 O-linked glycan (1 site)"/>
</dbReference>
<dbReference type="iPTMnet" id="Q9DBW0"/>
<dbReference type="PhosphoSitePlus" id="Q9DBW0"/>
<dbReference type="SwissPalm" id="Q9DBW0"/>
<dbReference type="jPOST" id="Q9DBW0"/>
<dbReference type="PaxDb" id="10090-ENSMUSP00000092966"/>
<dbReference type="ProteomicsDB" id="285282"/>
<dbReference type="Pumba" id="Q9DBW0"/>
<dbReference type="DNASU" id="102294"/>
<dbReference type="Ensembl" id="ENSMUST00000095328.6">
    <property type="protein sequence ID" value="ENSMUSP00000092966.5"/>
    <property type="gene ID" value="ENSMUSG00000079057.5"/>
</dbReference>
<dbReference type="GeneID" id="102294"/>
<dbReference type="KEGG" id="mmu:102294"/>
<dbReference type="UCSC" id="uc009lou.1">
    <property type="organism name" value="mouse"/>
</dbReference>
<dbReference type="AGR" id="MGI:2142763"/>
<dbReference type="CTD" id="102294"/>
<dbReference type="MGI" id="MGI:2142763">
    <property type="gene designation" value="Cyp4v3"/>
</dbReference>
<dbReference type="VEuPathDB" id="HostDB:ENSMUSG00000079057"/>
<dbReference type="eggNOG" id="KOG0157">
    <property type="taxonomic scope" value="Eukaryota"/>
</dbReference>
<dbReference type="GeneTree" id="ENSGT00940000157278"/>
<dbReference type="HOGENOM" id="CLU_001570_5_1_1"/>
<dbReference type="InParanoid" id="Q9DBW0"/>
<dbReference type="OMA" id="MDMRYLE"/>
<dbReference type="OrthoDB" id="1470350at2759"/>
<dbReference type="PhylomeDB" id="Q9DBW0"/>
<dbReference type="TreeFam" id="TF105088"/>
<dbReference type="Reactome" id="R-MMU-211976">
    <property type="pathway name" value="Endogenous sterols"/>
</dbReference>
<dbReference type="Reactome" id="R-MMU-2453902">
    <property type="pathway name" value="The canonical retinoid cycle in rods (twilight vision)"/>
</dbReference>
<dbReference type="UniPathway" id="UPA00199"/>
<dbReference type="BioGRID-ORCS" id="102294">
    <property type="hits" value="1 hit in 77 CRISPR screens"/>
</dbReference>
<dbReference type="ChiTaRS" id="Cyp4v3">
    <property type="organism name" value="mouse"/>
</dbReference>
<dbReference type="PRO" id="PR:Q9DBW0"/>
<dbReference type="Proteomes" id="UP000000589">
    <property type="component" value="Chromosome 8"/>
</dbReference>
<dbReference type="RNAct" id="Q9DBW0">
    <property type="molecule type" value="protein"/>
</dbReference>
<dbReference type="Bgee" id="ENSMUSG00000079057">
    <property type="expression patterns" value="Expressed in small intestine Peyer's patch and 180 other cell types or tissues"/>
</dbReference>
<dbReference type="ExpressionAtlas" id="Q9DBW0">
    <property type="expression patterns" value="baseline and differential"/>
</dbReference>
<dbReference type="GO" id="GO:0005789">
    <property type="term" value="C:endoplasmic reticulum membrane"/>
    <property type="evidence" value="ECO:0000250"/>
    <property type="project" value="UniProtKB"/>
</dbReference>
<dbReference type="GO" id="GO:0020037">
    <property type="term" value="F:heme binding"/>
    <property type="evidence" value="ECO:0007669"/>
    <property type="project" value="InterPro"/>
</dbReference>
<dbReference type="GO" id="GO:0005506">
    <property type="term" value="F:iron ion binding"/>
    <property type="evidence" value="ECO:0007669"/>
    <property type="project" value="InterPro"/>
</dbReference>
<dbReference type="GO" id="GO:0102033">
    <property type="term" value="F:long-chain fatty acid omega-hydroxylase activity"/>
    <property type="evidence" value="ECO:0007669"/>
    <property type="project" value="UniProtKB-EC"/>
</dbReference>
<dbReference type="GO" id="GO:0010430">
    <property type="term" value="P:fatty acid omega-oxidation"/>
    <property type="evidence" value="ECO:0000250"/>
    <property type="project" value="UniProtKB"/>
</dbReference>
<dbReference type="CDD" id="cd20680">
    <property type="entry name" value="CYP4V"/>
    <property type="match status" value="1"/>
</dbReference>
<dbReference type="FunFam" id="1.10.630.10:FF:000035">
    <property type="entry name" value="CYtochrome P450 family"/>
    <property type="match status" value="1"/>
</dbReference>
<dbReference type="Gene3D" id="1.10.630.10">
    <property type="entry name" value="Cytochrome P450"/>
    <property type="match status" value="1"/>
</dbReference>
<dbReference type="InterPro" id="IPR001128">
    <property type="entry name" value="Cyt_P450"/>
</dbReference>
<dbReference type="InterPro" id="IPR017972">
    <property type="entry name" value="Cyt_P450_CS"/>
</dbReference>
<dbReference type="InterPro" id="IPR002401">
    <property type="entry name" value="Cyt_P450_E_grp-I"/>
</dbReference>
<dbReference type="InterPro" id="IPR036396">
    <property type="entry name" value="Cyt_P450_sf"/>
</dbReference>
<dbReference type="InterPro" id="IPR050196">
    <property type="entry name" value="Cytochrome_P450_Monoox"/>
</dbReference>
<dbReference type="PANTHER" id="PTHR24291:SF193">
    <property type="entry name" value="CYTOCHROME P450 4V2"/>
    <property type="match status" value="1"/>
</dbReference>
<dbReference type="PANTHER" id="PTHR24291">
    <property type="entry name" value="CYTOCHROME P450 FAMILY 4"/>
    <property type="match status" value="1"/>
</dbReference>
<dbReference type="Pfam" id="PF00067">
    <property type="entry name" value="p450"/>
    <property type="match status" value="1"/>
</dbReference>
<dbReference type="PRINTS" id="PR00463">
    <property type="entry name" value="EP450I"/>
</dbReference>
<dbReference type="PRINTS" id="PR00385">
    <property type="entry name" value="P450"/>
</dbReference>
<dbReference type="SUPFAM" id="SSF48264">
    <property type="entry name" value="Cytochrome P450"/>
    <property type="match status" value="1"/>
</dbReference>
<dbReference type="PROSITE" id="PS00086">
    <property type="entry name" value="CYTOCHROME_P450"/>
    <property type="match status" value="1"/>
</dbReference>
<organism>
    <name type="scientific">Mus musculus</name>
    <name type="common">Mouse</name>
    <dbReference type="NCBI Taxonomy" id="10090"/>
    <lineage>
        <taxon>Eukaryota</taxon>
        <taxon>Metazoa</taxon>
        <taxon>Chordata</taxon>
        <taxon>Craniata</taxon>
        <taxon>Vertebrata</taxon>
        <taxon>Euteleostomi</taxon>
        <taxon>Mammalia</taxon>
        <taxon>Eutheria</taxon>
        <taxon>Euarchontoglires</taxon>
        <taxon>Glires</taxon>
        <taxon>Rodentia</taxon>
        <taxon>Myomorpha</taxon>
        <taxon>Muroidea</taxon>
        <taxon>Muridae</taxon>
        <taxon>Murinae</taxon>
        <taxon>Mus</taxon>
        <taxon>Mus</taxon>
    </lineage>
</organism>
<evidence type="ECO:0000250" key="1">
    <source>
        <dbReference type="UniProtKB" id="P51869"/>
    </source>
</evidence>
<evidence type="ECO:0000250" key="2">
    <source>
        <dbReference type="UniProtKB" id="Q6ZWL3"/>
    </source>
</evidence>
<evidence type="ECO:0000255" key="3"/>
<evidence type="ECO:0000305" key="4"/>
<feature type="chain" id="PRO_0000051861" description="Cytochrome P450 4V2">
    <location>
        <begin position="1"/>
        <end position="525"/>
    </location>
</feature>
<feature type="transmembrane region" description="Helical" evidence="3">
    <location>
        <begin position="14"/>
        <end position="34"/>
    </location>
</feature>
<feature type="binding site" description="covalent" evidence="1">
    <location>
        <position position="329"/>
    </location>
    <ligand>
        <name>heme</name>
        <dbReference type="ChEBI" id="CHEBI:30413"/>
    </ligand>
</feature>
<feature type="binding site" description="axial binding residue" evidence="1">
    <location>
        <position position="467"/>
    </location>
    <ligand>
        <name>heme</name>
        <dbReference type="ChEBI" id="CHEBI:30413"/>
    </ligand>
    <ligandPart>
        <name>Fe</name>
        <dbReference type="ChEBI" id="CHEBI:18248"/>
    </ligandPart>
</feature>
<comment type="function">
    <text evidence="2">A cytochrome P450 monooxygenase involved in fatty acid metabolism in the eye. Catalyzes the omega-hydroxylation of polyunsaturated fatty acids (PUFAs) docosahexaenoate (DHA) and its precursor eicosapentaenoate (EPA), and may contribute to the homeostasis of these retinal PUFAs. Omega hydroxylates saturated fatty acids such as laurate, myristate and palmitate, the catalytic efficiency decreasing in the following order: myristate &gt; laurate &gt; palmitate (C14&gt;C12&gt;C16). Mechanistically, uses molecular oxygen inserting one oxygen atom into a substrate, and reducing the second into a water molecule, with two electrons provided by NADPH via cytochrome P450 reductase (CPR; NADPH-ferrihemoprotein reductase).</text>
</comment>
<comment type="catalytic activity">
    <reaction evidence="2">
        <text>dodecanoate + reduced [NADPH--hemoprotein reductase] + O2 = 12-hydroxydodecanoate + oxidized [NADPH--hemoprotein reductase] + H2O + H(+)</text>
        <dbReference type="Rhea" id="RHEA:38947"/>
        <dbReference type="Rhea" id="RHEA-COMP:11964"/>
        <dbReference type="Rhea" id="RHEA-COMP:11965"/>
        <dbReference type="ChEBI" id="CHEBI:15377"/>
        <dbReference type="ChEBI" id="CHEBI:15378"/>
        <dbReference type="ChEBI" id="CHEBI:15379"/>
        <dbReference type="ChEBI" id="CHEBI:18262"/>
        <dbReference type="ChEBI" id="CHEBI:36204"/>
        <dbReference type="ChEBI" id="CHEBI:57618"/>
        <dbReference type="ChEBI" id="CHEBI:58210"/>
    </reaction>
    <physiologicalReaction direction="left-to-right" evidence="2">
        <dbReference type="Rhea" id="RHEA:38948"/>
    </physiologicalReaction>
</comment>
<comment type="catalytic activity">
    <reaction evidence="2">
        <text>tetradecanoate + reduced [NADPH--hemoprotein reductase] + O2 = 14-hydroxytetradecanoate + oxidized [NADPH--hemoprotein reductase] + H2O + H(+)</text>
        <dbReference type="Rhea" id="RHEA:40203"/>
        <dbReference type="Rhea" id="RHEA-COMP:11964"/>
        <dbReference type="Rhea" id="RHEA-COMP:11965"/>
        <dbReference type="ChEBI" id="CHEBI:15377"/>
        <dbReference type="ChEBI" id="CHEBI:15378"/>
        <dbReference type="ChEBI" id="CHEBI:15379"/>
        <dbReference type="ChEBI" id="CHEBI:30807"/>
        <dbReference type="ChEBI" id="CHEBI:57618"/>
        <dbReference type="ChEBI" id="CHEBI:58210"/>
        <dbReference type="ChEBI" id="CHEBI:77033"/>
    </reaction>
    <physiologicalReaction direction="left-to-right" evidence="2">
        <dbReference type="Rhea" id="RHEA:40204"/>
    </physiologicalReaction>
</comment>
<comment type="catalytic activity">
    <reaction evidence="2">
        <text>hexadecanoate + reduced [NADPH--hemoprotein reductase] + O2 = 16-hydroxyhexadecanoate + oxidized [NADPH--hemoprotein reductase] + H2O + H(+)</text>
        <dbReference type="Rhea" id="RHEA:40199"/>
        <dbReference type="Rhea" id="RHEA-COMP:11964"/>
        <dbReference type="Rhea" id="RHEA-COMP:11965"/>
        <dbReference type="ChEBI" id="CHEBI:7896"/>
        <dbReference type="ChEBI" id="CHEBI:15377"/>
        <dbReference type="ChEBI" id="CHEBI:15378"/>
        <dbReference type="ChEBI" id="CHEBI:15379"/>
        <dbReference type="ChEBI" id="CHEBI:55329"/>
        <dbReference type="ChEBI" id="CHEBI:57618"/>
        <dbReference type="ChEBI" id="CHEBI:58210"/>
        <dbReference type="EC" id="1.14.14.80"/>
    </reaction>
    <physiologicalReaction direction="left-to-right" evidence="2">
        <dbReference type="Rhea" id="RHEA:40200"/>
    </physiologicalReaction>
</comment>
<comment type="catalytic activity">
    <reaction evidence="2">
        <text>(5Z,8Z,11Z,14Z,17Z)-eicosapentaenoate + reduced [NADPH--hemoprotein reductase] + O2 = 20-hydroxy-(5Z,8Z,11Z,14Z,17Z)-eicosapentaenoate + oxidized [NADPH--hemoprotein reductase] + H2O + H(+)</text>
        <dbReference type="Rhea" id="RHEA:39791"/>
        <dbReference type="Rhea" id="RHEA-COMP:11964"/>
        <dbReference type="Rhea" id="RHEA-COMP:11965"/>
        <dbReference type="ChEBI" id="CHEBI:15377"/>
        <dbReference type="ChEBI" id="CHEBI:15378"/>
        <dbReference type="ChEBI" id="CHEBI:15379"/>
        <dbReference type="ChEBI" id="CHEBI:57618"/>
        <dbReference type="ChEBI" id="CHEBI:58210"/>
        <dbReference type="ChEBI" id="CHEBI:58562"/>
        <dbReference type="ChEBI" id="CHEBI:76639"/>
    </reaction>
    <physiologicalReaction direction="left-to-right" evidence="2">
        <dbReference type="Rhea" id="RHEA:39792"/>
    </physiologicalReaction>
</comment>
<comment type="catalytic activity">
    <reaction evidence="2">
        <text>(4Z,7Z,10Z,13Z,16Z,19Z)-docosahexaenoate + reduced [NADPH--hemoprotein reductase] + O2 = 22-hydroxy-(4Z,7Z,10Z,13Z,16Z,19Z)-docosahexaenoate + oxidized [NADPH--hemoprotein reductase] + H2O + H(+)</text>
        <dbReference type="Rhea" id="RHEA:40155"/>
        <dbReference type="Rhea" id="RHEA-COMP:11964"/>
        <dbReference type="Rhea" id="RHEA-COMP:11965"/>
        <dbReference type="ChEBI" id="CHEBI:15377"/>
        <dbReference type="ChEBI" id="CHEBI:15378"/>
        <dbReference type="ChEBI" id="CHEBI:15379"/>
        <dbReference type="ChEBI" id="CHEBI:57618"/>
        <dbReference type="ChEBI" id="CHEBI:58210"/>
        <dbReference type="ChEBI" id="CHEBI:77015"/>
        <dbReference type="ChEBI" id="CHEBI:77016"/>
        <dbReference type="EC" id="1.14.14.79"/>
    </reaction>
    <physiologicalReaction direction="left-to-right" evidence="2">
        <dbReference type="Rhea" id="RHEA:40156"/>
    </physiologicalReaction>
</comment>
<comment type="cofactor">
    <cofactor evidence="1">
        <name>heme</name>
        <dbReference type="ChEBI" id="CHEBI:30413"/>
    </cofactor>
</comment>
<comment type="activity regulation">
    <text evidence="2">Inhibited by N-hydroxy-N'-(4-n-butyl-2-methylphenyl formamidine)(HET0016) with an IC(50) of 38 nM.</text>
</comment>
<comment type="pathway">
    <text evidence="2">Lipid metabolism; fatty acid metabolism.</text>
</comment>
<comment type="subcellular location">
    <subcellularLocation>
        <location evidence="2">Endoplasmic reticulum membrane</location>
        <topology evidence="4">Single-pass membrane protein</topology>
    </subcellularLocation>
</comment>
<comment type="similarity">
    <text evidence="4">Belongs to the cytochrome P450 family.</text>
</comment>
<reference key="1">
    <citation type="submission" date="2001-02" db="EMBL/GenBank/DDBJ databases">
        <title>Mouse mRNA for cytochrome P450, cDNA clone KK-1.</title>
        <authorList>
            <person name="Fujita Y."/>
            <person name="Kase K."/>
            <person name="Ohi H."/>
        </authorList>
    </citation>
    <scope>NUCLEOTIDE SEQUENCE [MRNA]</scope>
    <source>
        <strain>C57BL/6J</strain>
        <tissue>Liver</tissue>
    </source>
</reference>
<reference key="2">
    <citation type="journal article" date="2005" name="Science">
        <title>The transcriptional landscape of the mammalian genome.</title>
        <authorList>
            <person name="Carninci P."/>
            <person name="Kasukawa T."/>
            <person name="Katayama S."/>
            <person name="Gough J."/>
            <person name="Frith M.C."/>
            <person name="Maeda N."/>
            <person name="Oyama R."/>
            <person name="Ravasi T."/>
            <person name="Lenhard B."/>
            <person name="Wells C."/>
            <person name="Kodzius R."/>
            <person name="Shimokawa K."/>
            <person name="Bajic V.B."/>
            <person name="Brenner S.E."/>
            <person name="Batalov S."/>
            <person name="Forrest A.R."/>
            <person name="Zavolan M."/>
            <person name="Davis M.J."/>
            <person name="Wilming L.G."/>
            <person name="Aidinis V."/>
            <person name="Allen J.E."/>
            <person name="Ambesi-Impiombato A."/>
            <person name="Apweiler R."/>
            <person name="Aturaliya R.N."/>
            <person name="Bailey T.L."/>
            <person name="Bansal M."/>
            <person name="Baxter L."/>
            <person name="Beisel K.W."/>
            <person name="Bersano T."/>
            <person name="Bono H."/>
            <person name="Chalk A.M."/>
            <person name="Chiu K.P."/>
            <person name="Choudhary V."/>
            <person name="Christoffels A."/>
            <person name="Clutterbuck D.R."/>
            <person name="Crowe M.L."/>
            <person name="Dalla E."/>
            <person name="Dalrymple B.P."/>
            <person name="de Bono B."/>
            <person name="Della Gatta G."/>
            <person name="di Bernardo D."/>
            <person name="Down T."/>
            <person name="Engstrom P."/>
            <person name="Fagiolini M."/>
            <person name="Faulkner G."/>
            <person name="Fletcher C.F."/>
            <person name="Fukushima T."/>
            <person name="Furuno M."/>
            <person name="Futaki S."/>
            <person name="Gariboldi M."/>
            <person name="Georgii-Hemming P."/>
            <person name="Gingeras T.R."/>
            <person name="Gojobori T."/>
            <person name="Green R.E."/>
            <person name="Gustincich S."/>
            <person name="Harbers M."/>
            <person name="Hayashi Y."/>
            <person name="Hensch T.K."/>
            <person name="Hirokawa N."/>
            <person name="Hill D."/>
            <person name="Huminiecki L."/>
            <person name="Iacono M."/>
            <person name="Ikeo K."/>
            <person name="Iwama A."/>
            <person name="Ishikawa T."/>
            <person name="Jakt M."/>
            <person name="Kanapin A."/>
            <person name="Katoh M."/>
            <person name="Kawasawa Y."/>
            <person name="Kelso J."/>
            <person name="Kitamura H."/>
            <person name="Kitano H."/>
            <person name="Kollias G."/>
            <person name="Krishnan S.P."/>
            <person name="Kruger A."/>
            <person name="Kummerfeld S.K."/>
            <person name="Kurochkin I.V."/>
            <person name="Lareau L.F."/>
            <person name="Lazarevic D."/>
            <person name="Lipovich L."/>
            <person name="Liu J."/>
            <person name="Liuni S."/>
            <person name="McWilliam S."/>
            <person name="Madan Babu M."/>
            <person name="Madera M."/>
            <person name="Marchionni L."/>
            <person name="Matsuda H."/>
            <person name="Matsuzawa S."/>
            <person name="Miki H."/>
            <person name="Mignone F."/>
            <person name="Miyake S."/>
            <person name="Morris K."/>
            <person name="Mottagui-Tabar S."/>
            <person name="Mulder N."/>
            <person name="Nakano N."/>
            <person name="Nakauchi H."/>
            <person name="Ng P."/>
            <person name="Nilsson R."/>
            <person name="Nishiguchi S."/>
            <person name="Nishikawa S."/>
            <person name="Nori F."/>
            <person name="Ohara O."/>
            <person name="Okazaki Y."/>
            <person name="Orlando V."/>
            <person name="Pang K.C."/>
            <person name="Pavan W.J."/>
            <person name="Pavesi G."/>
            <person name="Pesole G."/>
            <person name="Petrovsky N."/>
            <person name="Piazza S."/>
            <person name="Reed J."/>
            <person name="Reid J.F."/>
            <person name="Ring B.Z."/>
            <person name="Ringwald M."/>
            <person name="Rost B."/>
            <person name="Ruan Y."/>
            <person name="Salzberg S.L."/>
            <person name="Sandelin A."/>
            <person name="Schneider C."/>
            <person name="Schoenbach C."/>
            <person name="Sekiguchi K."/>
            <person name="Semple C.A."/>
            <person name="Seno S."/>
            <person name="Sessa L."/>
            <person name="Sheng Y."/>
            <person name="Shibata Y."/>
            <person name="Shimada H."/>
            <person name="Shimada K."/>
            <person name="Silva D."/>
            <person name="Sinclair B."/>
            <person name="Sperling S."/>
            <person name="Stupka E."/>
            <person name="Sugiura K."/>
            <person name="Sultana R."/>
            <person name="Takenaka Y."/>
            <person name="Taki K."/>
            <person name="Tammoja K."/>
            <person name="Tan S.L."/>
            <person name="Tang S."/>
            <person name="Taylor M.S."/>
            <person name="Tegner J."/>
            <person name="Teichmann S.A."/>
            <person name="Ueda H.R."/>
            <person name="van Nimwegen E."/>
            <person name="Verardo R."/>
            <person name="Wei C.L."/>
            <person name="Yagi K."/>
            <person name="Yamanishi H."/>
            <person name="Zabarovsky E."/>
            <person name="Zhu S."/>
            <person name="Zimmer A."/>
            <person name="Hide W."/>
            <person name="Bult C."/>
            <person name="Grimmond S.M."/>
            <person name="Teasdale R.D."/>
            <person name="Liu E.T."/>
            <person name="Brusic V."/>
            <person name="Quackenbush J."/>
            <person name="Wahlestedt C."/>
            <person name="Mattick J.S."/>
            <person name="Hume D.A."/>
            <person name="Kai C."/>
            <person name="Sasaki D."/>
            <person name="Tomaru Y."/>
            <person name="Fukuda S."/>
            <person name="Kanamori-Katayama M."/>
            <person name="Suzuki M."/>
            <person name="Aoki J."/>
            <person name="Arakawa T."/>
            <person name="Iida J."/>
            <person name="Imamura K."/>
            <person name="Itoh M."/>
            <person name="Kato T."/>
            <person name="Kawaji H."/>
            <person name="Kawagashira N."/>
            <person name="Kawashima T."/>
            <person name="Kojima M."/>
            <person name="Kondo S."/>
            <person name="Konno H."/>
            <person name="Nakano K."/>
            <person name="Ninomiya N."/>
            <person name="Nishio T."/>
            <person name="Okada M."/>
            <person name="Plessy C."/>
            <person name="Shibata K."/>
            <person name="Shiraki T."/>
            <person name="Suzuki S."/>
            <person name="Tagami M."/>
            <person name="Waki K."/>
            <person name="Watahiki A."/>
            <person name="Okamura-Oho Y."/>
            <person name="Suzuki H."/>
            <person name="Kawai J."/>
            <person name="Hayashizaki Y."/>
        </authorList>
    </citation>
    <scope>NUCLEOTIDE SEQUENCE [LARGE SCALE MRNA]</scope>
    <source>
        <strain>C57BL/6J</strain>
        <tissue>Lung</tissue>
    </source>
</reference>
<reference key="3">
    <citation type="submission" date="2009-01" db="UniProtKB">
        <authorList>
            <person name="Lubec G."/>
            <person name="Sunyer B."/>
            <person name="Chen W.-Q."/>
        </authorList>
    </citation>
    <scope>PROTEIN SEQUENCE OF 472-478</scope>
    <scope>IDENTIFICATION BY MASS SPECTROMETRY</scope>
    <source>
        <strain>OF1</strain>
        <tissue>Hippocampus</tissue>
    </source>
</reference>
<reference key="4">
    <citation type="journal article" date="2007" name="Proc. Natl. Acad. Sci. U.S.A.">
        <title>Large-scale phosphorylation analysis of mouse liver.</title>
        <authorList>
            <person name="Villen J."/>
            <person name="Beausoleil S.A."/>
            <person name="Gerber S.A."/>
            <person name="Gygi S.P."/>
        </authorList>
    </citation>
    <scope>IDENTIFICATION BY MASS SPECTROMETRY [LARGE SCALE ANALYSIS]</scope>
    <source>
        <tissue>Liver</tissue>
    </source>
</reference>
<reference key="5">
    <citation type="journal article" date="2010" name="Cell">
        <title>A tissue-specific atlas of mouse protein phosphorylation and expression.</title>
        <authorList>
            <person name="Huttlin E.L."/>
            <person name="Jedrychowski M.P."/>
            <person name="Elias J.E."/>
            <person name="Goswami T."/>
            <person name="Rad R."/>
            <person name="Beausoleil S.A."/>
            <person name="Villen J."/>
            <person name="Haas W."/>
            <person name="Sowa M.E."/>
            <person name="Gygi S.P."/>
        </authorList>
    </citation>
    <scope>IDENTIFICATION BY MASS SPECTROMETRY [LARGE SCALE ANALYSIS]</scope>
    <source>
        <tissue>Brown adipose tissue</tissue>
        <tissue>Liver</tissue>
    </source>
</reference>
<protein>
    <recommendedName>
        <fullName>Cytochrome P450 4V2</fullName>
    </recommendedName>
    <alternativeName>
        <fullName evidence="2">Docosahexaenoic acid omega-hydroxylase CYP4V2</fullName>
        <ecNumber evidence="2">1.14.14.79</ecNumber>
    </alternativeName>
    <alternativeName>
        <fullName evidence="2">Long-chain fatty acid omega-monooxygenase</fullName>
        <ecNumber evidence="2">1.14.14.80</ecNumber>
    </alternativeName>
</protein>
<sequence length="525" mass="60939">MLWLWLGLSGQKLLLWGAASAVSLAGATILISIFPMLVSYARKWQQMRSIPSVARAYPLVGHALYMKPNNAEFFQQLIYYTEEFRHLPIIKLWIGPVPLVALYKAENVEVILTSSKQIDKSFLYKFLQPWLGLGLLTSTGSKWRTRRKMLTPTFHFTILENFLDVMNEQANILVNKLEKHVNQEAFNCFFYITLCALDIICETAMGKNIGAQSNNDSEYVRTVYRMSDMIYRRMKMPWLWFDLWYLVFKEGRDHKRGLKCLHTFTNNVIAERVKERKAEEDWTGAGRGPIPSKNKRKAFLDLLLSVTDEEGNRLSQEDIREEVDTFMFEGHDTTAAAINWSLYLLGTNPEVQRKVDQELDEVFGRSHRPVTLEDLKKLKYLDCVIKETLRVFPSVPLFARSLSEDCEVGGYKVTKGTEAIIIPYALHRDPRYFPDPEEFRPERFFPENSQGRHPYAYVPFSAGPRNCIGQKFAVMEEKTILACILRQFWVESNQKREELGLAGDLILRPNNGIWIKLKRRHEDDP</sequence>
<name>CP4V2_MOUSE</name>